<sequence>MCAVLDRSMLSVAEISDRLEIQQLLVDYSSAIDQRRFDDLDRVFTPDAYIDYRALGGIDGRYPKIKQWLSQVLGNFPVYAHMLGNFSVRVDGDTASSRVICFNPMVFAGDRQQVLFCGLWYDDDFVRTPDGWRIIRRVETKCFQKMM</sequence>
<keyword id="KW-1185">Reference proteome</keyword>
<feature type="chain" id="PRO_0000427553" description="Uncharacterized protein MT2978">
    <location>
        <begin position="1"/>
        <end position="147"/>
    </location>
</feature>
<organism>
    <name type="scientific">Mycobacterium tuberculosis (strain CDC 1551 / Oshkosh)</name>
    <dbReference type="NCBI Taxonomy" id="83331"/>
    <lineage>
        <taxon>Bacteria</taxon>
        <taxon>Bacillati</taxon>
        <taxon>Actinomycetota</taxon>
        <taxon>Actinomycetes</taxon>
        <taxon>Mycobacteriales</taxon>
        <taxon>Mycobacteriaceae</taxon>
        <taxon>Mycobacterium</taxon>
        <taxon>Mycobacterium tuberculosis complex</taxon>
    </lineage>
</organism>
<gene>
    <name type="ordered locus">MT2978</name>
</gene>
<dbReference type="EMBL" id="AE000516">
    <property type="protein sequence ID" value="AAK47304.1"/>
    <property type="molecule type" value="Genomic_DNA"/>
</dbReference>
<dbReference type="PIR" id="A70928">
    <property type="entry name" value="A70928"/>
</dbReference>
<dbReference type="SMR" id="P9WL24"/>
<dbReference type="KEGG" id="mtc:MT2978"/>
<dbReference type="PATRIC" id="fig|83331.31.peg.3218"/>
<dbReference type="HOGENOM" id="CLU_106738_10_2_11"/>
<dbReference type="Proteomes" id="UP000001020">
    <property type="component" value="Chromosome"/>
</dbReference>
<dbReference type="CDD" id="cd00531">
    <property type="entry name" value="NTF2_like"/>
    <property type="match status" value="1"/>
</dbReference>
<dbReference type="Gene3D" id="3.10.450.50">
    <property type="match status" value="1"/>
</dbReference>
<dbReference type="InterPro" id="IPR032710">
    <property type="entry name" value="NTF2-like_dom_sf"/>
</dbReference>
<dbReference type="InterPro" id="IPR037401">
    <property type="entry name" value="SnoaL-like"/>
</dbReference>
<dbReference type="Pfam" id="PF13577">
    <property type="entry name" value="SnoaL_4"/>
    <property type="match status" value="1"/>
</dbReference>
<dbReference type="SUPFAM" id="SSF54427">
    <property type="entry name" value="NTF2-like"/>
    <property type="match status" value="1"/>
</dbReference>
<protein>
    <recommendedName>
        <fullName>Uncharacterized protein MT2978</fullName>
    </recommendedName>
</protein>
<reference key="1">
    <citation type="journal article" date="2002" name="J. Bacteriol.">
        <title>Whole-genome comparison of Mycobacterium tuberculosis clinical and laboratory strains.</title>
        <authorList>
            <person name="Fleischmann R.D."/>
            <person name="Alland D."/>
            <person name="Eisen J.A."/>
            <person name="Carpenter L."/>
            <person name="White O."/>
            <person name="Peterson J.D."/>
            <person name="DeBoy R.T."/>
            <person name="Dodson R.J."/>
            <person name="Gwinn M.L."/>
            <person name="Haft D.H."/>
            <person name="Hickey E.K."/>
            <person name="Kolonay J.F."/>
            <person name="Nelson W.C."/>
            <person name="Umayam L.A."/>
            <person name="Ermolaeva M.D."/>
            <person name="Salzberg S.L."/>
            <person name="Delcher A."/>
            <person name="Utterback T.R."/>
            <person name="Weidman J.F."/>
            <person name="Khouri H.M."/>
            <person name="Gill J."/>
            <person name="Mikula A."/>
            <person name="Bishai W."/>
            <person name="Jacobs W.R. Jr."/>
            <person name="Venter J.C."/>
            <person name="Fraser C.M."/>
        </authorList>
    </citation>
    <scope>NUCLEOTIDE SEQUENCE [LARGE SCALE GENOMIC DNA]</scope>
    <source>
        <strain>CDC 1551 / Oshkosh</strain>
    </source>
</reference>
<accession>P9WL24</accession>
<accession>L0TDX4</accession>
<accession>P65053</accession>
<accession>Q10827</accession>
<name>Y2910_MYCTO</name>
<proteinExistence type="predicted"/>